<dbReference type="EMBL" id="CP000948">
    <property type="protein sequence ID" value="ACB03827.1"/>
    <property type="molecule type" value="Genomic_DNA"/>
</dbReference>
<dbReference type="RefSeq" id="WP_000010749.1">
    <property type="nucleotide sequence ID" value="NC_010473.1"/>
</dbReference>
<dbReference type="SMR" id="B1XCN6"/>
<dbReference type="KEGG" id="ecd:ECDH10B_2877"/>
<dbReference type="HOGENOM" id="CLU_000445_125_0_6"/>
<dbReference type="UniPathway" id="UPA00638"/>
<dbReference type="GO" id="GO:0005524">
    <property type="term" value="F:ATP binding"/>
    <property type="evidence" value="ECO:0007669"/>
    <property type="project" value="UniProtKB-UniRule"/>
</dbReference>
<dbReference type="GO" id="GO:0016887">
    <property type="term" value="F:ATP hydrolysis activity"/>
    <property type="evidence" value="ECO:0007669"/>
    <property type="project" value="InterPro"/>
</dbReference>
<dbReference type="GO" id="GO:0003677">
    <property type="term" value="F:DNA binding"/>
    <property type="evidence" value="ECO:0007669"/>
    <property type="project" value="UniProtKB-KW"/>
</dbReference>
<dbReference type="GO" id="GO:0003700">
    <property type="term" value="F:DNA-binding transcription factor activity"/>
    <property type="evidence" value="ECO:0007669"/>
    <property type="project" value="UniProtKB-UniRule"/>
</dbReference>
<dbReference type="GO" id="GO:0000160">
    <property type="term" value="P:phosphorelay signal transduction system"/>
    <property type="evidence" value="ECO:0007669"/>
    <property type="project" value="UniProtKB-UniRule"/>
</dbReference>
<dbReference type="CDD" id="cd00009">
    <property type="entry name" value="AAA"/>
    <property type="match status" value="1"/>
</dbReference>
<dbReference type="FunFam" id="1.10.10.60:FF:000188">
    <property type="entry name" value="Anaerobic nitric oxide reductase transcription regulator NorR"/>
    <property type="match status" value="1"/>
</dbReference>
<dbReference type="FunFam" id="1.10.8.60:FF:000045">
    <property type="entry name" value="Anaerobic nitric oxide reductase transcription regulator NorR"/>
    <property type="match status" value="1"/>
</dbReference>
<dbReference type="FunFam" id="3.30.450.40:FF:000021">
    <property type="entry name" value="Anaerobic nitric oxide reductase transcription regulator NorR"/>
    <property type="match status" value="1"/>
</dbReference>
<dbReference type="FunFam" id="3.40.50.300:FF:000006">
    <property type="entry name" value="DNA-binding transcriptional regulator NtrC"/>
    <property type="match status" value="1"/>
</dbReference>
<dbReference type="Gene3D" id="1.10.8.60">
    <property type="match status" value="1"/>
</dbReference>
<dbReference type="Gene3D" id="3.30.450.40">
    <property type="match status" value="1"/>
</dbReference>
<dbReference type="Gene3D" id="1.10.10.60">
    <property type="entry name" value="Homeodomain-like"/>
    <property type="match status" value="1"/>
</dbReference>
<dbReference type="Gene3D" id="3.40.50.300">
    <property type="entry name" value="P-loop containing nucleotide triphosphate hydrolases"/>
    <property type="match status" value="1"/>
</dbReference>
<dbReference type="HAMAP" id="MF_01314">
    <property type="entry name" value="NorR"/>
    <property type="match status" value="1"/>
</dbReference>
<dbReference type="InterPro" id="IPR003593">
    <property type="entry name" value="AAA+_ATPase"/>
</dbReference>
<dbReference type="InterPro" id="IPR003018">
    <property type="entry name" value="GAF"/>
</dbReference>
<dbReference type="InterPro" id="IPR029016">
    <property type="entry name" value="GAF-like_dom_sf"/>
</dbReference>
<dbReference type="InterPro" id="IPR009057">
    <property type="entry name" value="Homeodomain-like_sf"/>
</dbReference>
<dbReference type="InterPro" id="IPR023944">
    <property type="entry name" value="NorR"/>
</dbReference>
<dbReference type="InterPro" id="IPR027417">
    <property type="entry name" value="P-loop_NTPase"/>
</dbReference>
<dbReference type="InterPro" id="IPR002078">
    <property type="entry name" value="Sigma_54_int"/>
</dbReference>
<dbReference type="InterPro" id="IPR025662">
    <property type="entry name" value="Sigma_54_int_dom_ATP-bd_1"/>
</dbReference>
<dbReference type="InterPro" id="IPR025943">
    <property type="entry name" value="Sigma_54_int_dom_ATP-bd_2"/>
</dbReference>
<dbReference type="InterPro" id="IPR025944">
    <property type="entry name" value="Sigma_54_int_dom_CS"/>
</dbReference>
<dbReference type="NCBIfam" id="NF003451">
    <property type="entry name" value="PRK05022.1"/>
    <property type="match status" value="1"/>
</dbReference>
<dbReference type="PANTHER" id="PTHR32071:SF35">
    <property type="entry name" value="ANAEROBIC NITRIC OXIDE REDUCTASE TRANSCRIPTION REGULATOR NORR"/>
    <property type="match status" value="1"/>
</dbReference>
<dbReference type="PANTHER" id="PTHR32071">
    <property type="entry name" value="TRANSCRIPTIONAL REGULATORY PROTEIN"/>
    <property type="match status" value="1"/>
</dbReference>
<dbReference type="Pfam" id="PF01590">
    <property type="entry name" value="GAF"/>
    <property type="match status" value="1"/>
</dbReference>
<dbReference type="Pfam" id="PF00158">
    <property type="entry name" value="Sigma54_activat"/>
    <property type="match status" value="1"/>
</dbReference>
<dbReference type="SMART" id="SM00382">
    <property type="entry name" value="AAA"/>
    <property type="match status" value="1"/>
</dbReference>
<dbReference type="SMART" id="SM00065">
    <property type="entry name" value="GAF"/>
    <property type="match status" value="1"/>
</dbReference>
<dbReference type="SUPFAM" id="SSF55781">
    <property type="entry name" value="GAF domain-like"/>
    <property type="match status" value="1"/>
</dbReference>
<dbReference type="SUPFAM" id="SSF46689">
    <property type="entry name" value="Homeodomain-like"/>
    <property type="match status" value="1"/>
</dbReference>
<dbReference type="SUPFAM" id="SSF52540">
    <property type="entry name" value="P-loop containing nucleoside triphosphate hydrolases"/>
    <property type="match status" value="1"/>
</dbReference>
<dbReference type="PROSITE" id="PS00675">
    <property type="entry name" value="SIGMA54_INTERACT_1"/>
    <property type="match status" value="1"/>
</dbReference>
<dbReference type="PROSITE" id="PS00676">
    <property type="entry name" value="SIGMA54_INTERACT_2"/>
    <property type="match status" value="1"/>
</dbReference>
<dbReference type="PROSITE" id="PS00688">
    <property type="entry name" value="SIGMA54_INTERACT_3"/>
    <property type="match status" value="1"/>
</dbReference>
<dbReference type="PROSITE" id="PS50045">
    <property type="entry name" value="SIGMA54_INTERACT_4"/>
    <property type="match status" value="1"/>
</dbReference>
<feature type="chain" id="PRO_0000341319" description="Anaerobic nitric oxide reductase transcription regulator NorR">
    <location>
        <begin position="1"/>
        <end position="504"/>
    </location>
</feature>
<feature type="domain" description="Sigma-54 factor interaction">
    <location>
        <begin position="187"/>
        <end position="416"/>
    </location>
</feature>
<feature type="DNA-binding region" description="H-T-H motif" evidence="1">
    <location>
        <begin position="479"/>
        <end position="498"/>
    </location>
</feature>
<feature type="region of interest" description="NO sensor or transducer" evidence="3">
    <location>
        <begin position="1"/>
        <end position="186"/>
    </location>
</feature>
<feature type="binding site" evidence="2">
    <location>
        <begin position="215"/>
        <end position="222"/>
    </location>
    <ligand>
        <name>ATP</name>
        <dbReference type="ChEBI" id="CHEBI:30616"/>
    </ligand>
</feature>
<feature type="binding site" evidence="2">
    <location>
        <begin position="278"/>
        <end position="287"/>
    </location>
    <ligand>
        <name>ATP</name>
        <dbReference type="ChEBI" id="CHEBI:30616"/>
    </ligand>
</feature>
<feature type="modified residue" description="4-aspartylphosphate" evidence="1">
    <location>
        <position position="57"/>
    </location>
</feature>
<protein>
    <recommendedName>
        <fullName>Anaerobic nitric oxide reductase transcription regulator NorR</fullName>
    </recommendedName>
</protein>
<organism>
    <name type="scientific">Escherichia coli (strain K12 / DH10B)</name>
    <dbReference type="NCBI Taxonomy" id="316385"/>
    <lineage>
        <taxon>Bacteria</taxon>
        <taxon>Pseudomonadati</taxon>
        <taxon>Pseudomonadota</taxon>
        <taxon>Gammaproteobacteria</taxon>
        <taxon>Enterobacterales</taxon>
        <taxon>Enterobacteriaceae</taxon>
        <taxon>Escherichia</taxon>
    </lineage>
</organism>
<accession>B1XCN6</accession>
<reference key="1">
    <citation type="journal article" date="2008" name="J. Bacteriol.">
        <title>The complete genome sequence of Escherichia coli DH10B: insights into the biology of a laboratory workhorse.</title>
        <authorList>
            <person name="Durfee T."/>
            <person name="Nelson R."/>
            <person name="Baldwin S."/>
            <person name="Plunkett G. III"/>
            <person name="Burland V."/>
            <person name="Mau B."/>
            <person name="Petrosino J.F."/>
            <person name="Qin X."/>
            <person name="Muzny D.M."/>
            <person name="Ayele M."/>
            <person name="Gibbs R.A."/>
            <person name="Csorgo B."/>
            <person name="Posfai G."/>
            <person name="Weinstock G.M."/>
            <person name="Blattner F.R."/>
        </authorList>
    </citation>
    <scope>NUCLEOTIDE SEQUENCE [LARGE SCALE GENOMIC DNA]</scope>
    <source>
        <strain>K12 / DH10B</strain>
    </source>
</reference>
<reference key="2">
    <citation type="journal article" date="2002" name="J. Bacteriol.">
        <title>The NorR protein of Escherichia coli activates expression of the flavorubredoxin gene norV in response to reactive nitrogen species.</title>
        <authorList>
            <person name="Hutchings M.I."/>
            <person name="Mandhana N."/>
            <person name="Spiro S."/>
        </authorList>
    </citation>
    <scope>ROLE IN NORV TRANSCRIPTION</scope>
</reference>
<keyword id="KW-0067">ATP-binding</keyword>
<keyword id="KW-0238">DNA-binding</keyword>
<keyword id="KW-0547">Nucleotide-binding</keyword>
<keyword id="KW-0597">Phosphoprotein</keyword>
<keyword id="KW-0804">Transcription</keyword>
<keyword id="KW-0805">Transcription regulation</keyword>
<gene>
    <name type="primary">norR</name>
    <name type="ordered locus">ECDH10B_2877</name>
</gene>
<proteinExistence type="evidence at transcript level"/>
<name>NORR_ECODH</name>
<sequence length="504" mass="55236">MSFSVDVLANIAIELQRGIGHQDRFQRLITTLRQVLECDASALLRYDSRQFIPLAIDGLAKDVLGRRFALEGHPRLEAIARAGDVVRFPADSELPDPYDGLIPGQESLKVHACVGLPLFAGQNLIGALTLDGMQPDQFDVFSDEELRLIAALAAGALSNALLIEQLESQNMLPGDATPFEAVKQTQMIGLSPGMTQLKKEIEIVAASDLNVLISGETGTGKELVAKAIHEASPRAVNPLVYLNCAALPESVAESELFGHVKGAFTGAISNRSGKFEMADNGTLFLDEIGELSLALQAKLLRVLQYGDIQRVGDDRCLRVDVRVLAATNRDLREEVLAGRFRADLFHRLSVFPLSVPPLRERGDDVILLAGYFCEQCRLRQGLSRVVLSAGARNLLQHYSFPGNVRELEHAIHRAVVLARATRSGDEVILEAQHFAFPEVTLPTPEVAAVPVVKQNLREATEAFQRETIRQALAQNHHNWAACARMLETDVANLHRLAKRLGLKD</sequence>
<comment type="function">
    <text evidence="1">Required for the expression of anaerobic nitric oxide (NO) reductase, acts as a transcriptional activator for at least the norVW operon. Activation also requires sigma-54. Not required for induction of the aerobic NO-detoxifying enzyme NO dioxygenase. Binds to the promoter region of norVW, to a consensus target sequence, GT-(N7)-AC, which is highly conserved among proteobacteria (By similarity).</text>
</comment>
<comment type="pathway">
    <text>Nitrogen metabolism; nitric oxide reduction.</text>
</comment>
<comment type="induction">
    <text>By anaerobic conditions, however not induced by NO alone.</text>
</comment>
<evidence type="ECO:0000250" key="1"/>
<evidence type="ECO:0000255" key="2"/>
<evidence type="ECO:0000305" key="3"/>